<organism>
    <name type="scientific">Drosophila melanogaster</name>
    <name type="common">Fruit fly</name>
    <dbReference type="NCBI Taxonomy" id="7227"/>
    <lineage>
        <taxon>Eukaryota</taxon>
        <taxon>Metazoa</taxon>
        <taxon>Ecdysozoa</taxon>
        <taxon>Arthropoda</taxon>
        <taxon>Hexapoda</taxon>
        <taxon>Insecta</taxon>
        <taxon>Pterygota</taxon>
        <taxon>Neoptera</taxon>
        <taxon>Endopterygota</taxon>
        <taxon>Diptera</taxon>
        <taxon>Brachycera</taxon>
        <taxon>Muscomorpha</taxon>
        <taxon>Ephydroidea</taxon>
        <taxon>Drosophilidae</taxon>
        <taxon>Drosophila</taxon>
        <taxon>Sophophora</taxon>
    </lineage>
</organism>
<feature type="chain" id="PRO_0000073467" description="Spectrin alpha chain">
    <location>
        <begin position="1"/>
        <end position="2415"/>
    </location>
</feature>
<feature type="repeat" description="Spectrin 1" evidence="1">
    <location>
        <begin position="48"/>
        <end position="150"/>
    </location>
</feature>
<feature type="repeat" description="Spectrin 2" evidence="1">
    <location>
        <begin position="154"/>
        <end position="254"/>
    </location>
</feature>
<feature type="repeat" description="Spectrin 3" evidence="1">
    <location>
        <begin position="258"/>
        <end position="362"/>
    </location>
</feature>
<feature type="repeat" description="Spectrin 4" evidence="1">
    <location>
        <begin position="366"/>
        <end position="464"/>
    </location>
</feature>
<feature type="repeat" description="Spectrin 5" evidence="1">
    <location>
        <begin position="471"/>
        <end position="574"/>
    </location>
</feature>
<feature type="repeat" description="Spectrin 6" evidence="1">
    <location>
        <begin position="577"/>
        <end position="679"/>
    </location>
</feature>
<feature type="repeat" description="Spectrin 7" evidence="1">
    <location>
        <begin position="683"/>
        <end position="784"/>
    </location>
</feature>
<feature type="repeat" description="Spectrin 8" evidence="1">
    <location>
        <begin position="788"/>
        <end position="890"/>
    </location>
</feature>
<feature type="repeat" description="Spectrin 9" evidence="1">
    <location>
        <begin position="894"/>
        <end position="963"/>
    </location>
</feature>
<feature type="domain" description="SH3" evidence="2">
    <location>
        <begin position="970"/>
        <end position="1029"/>
    </location>
</feature>
<feature type="repeat" description="Spectrin 10" evidence="1">
    <location>
        <begin position="1079"/>
        <end position="1177"/>
    </location>
</feature>
<feature type="repeat" description="Spectrin 11" evidence="1">
    <location>
        <begin position="1181"/>
        <end position="1284"/>
    </location>
</feature>
<feature type="repeat" description="Spectrin 12" evidence="1">
    <location>
        <begin position="1287"/>
        <end position="1391"/>
    </location>
</feature>
<feature type="repeat" description="Spectrin 13" evidence="1">
    <location>
        <begin position="1394"/>
        <end position="1496"/>
    </location>
</feature>
<feature type="repeat" description="Spectrin 14" evidence="1">
    <location>
        <begin position="1500"/>
        <end position="1604"/>
    </location>
</feature>
<feature type="repeat" description="Spectrin 15" evidence="1">
    <location>
        <begin position="1608"/>
        <end position="1710"/>
    </location>
</feature>
<feature type="repeat" description="Spectrin 16" evidence="1">
    <location>
        <begin position="1714"/>
        <end position="1816"/>
    </location>
</feature>
<feature type="repeat" description="Spectrin 17" evidence="1">
    <location>
        <begin position="1820"/>
        <end position="1921"/>
    </location>
</feature>
<feature type="repeat" description="Spectrin 18" evidence="1">
    <location>
        <begin position="1926"/>
        <end position="2028"/>
    </location>
</feature>
<feature type="repeat" description="Spectrin 19" evidence="1">
    <location>
        <begin position="2040"/>
        <end position="2141"/>
    </location>
</feature>
<feature type="repeat" description="Spectrin 20" evidence="1">
    <location>
        <begin position="2154"/>
        <end position="2252"/>
    </location>
</feature>
<feature type="domain" description="EF-hand 1" evidence="3">
    <location>
        <begin position="2265"/>
        <end position="2300"/>
    </location>
</feature>
<feature type="domain" description="EF-hand 2" evidence="3">
    <location>
        <begin position="2308"/>
        <end position="2343"/>
    </location>
</feature>
<feature type="binding site" evidence="3">
    <location>
        <position position="2278"/>
    </location>
    <ligand>
        <name>Ca(2+)</name>
        <dbReference type="ChEBI" id="CHEBI:29108"/>
        <label>1</label>
    </ligand>
</feature>
<feature type="binding site" evidence="3">
    <location>
        <position position="2280"/>
    </location>
    <ligand>
        <name>Ca(2+)</name>
        <dbReference type="ChEBI" id="CHEBI:29108"/>
        <label>1</label>
    </ligand>
</feature>
<feature type="binding site" evidence="3">
    <location>
        <position position="2282"/>
    </location>
    <ligand>
        <name>Ca(2+)</name>
        <dbReference type="ChEBI" id="CHEBI:29108"/>
        <label>1</label>
    </ligand>
</feature>
<feature type="binding site" evidence="3">
    <location>
        <position position="2284"/>
    </location>
    <ligand>
        <name>Ca(2+)</name>
        <dbReference type="ChEBI" id="CHEBI:29108"/>
        <label>1</label>
    </ligand>
</feature>
<feature type="binding site" evidence="3">
    <location>
        <position position="2289"/>
    </location>
    <ligand>
        <name>Ca(2+)</name>
        <dbReference type="ChEBI" id="CHEBI:29108"/>
        <label>1</label>
    </ligand>
</feature>
<feature type="binding site" evidence="3">
    <location>
        <position position="2321"/>
    </location>
    <ligand>
        <name>Ca(2+)</name>
        <dbReference type="ChEBI" id="CHEBI:29108"/>
        <label>2</label>
    </ligand>
</feature>
<feature type="binding site" evidence="3">
    <location>
        <position position="2323"/>
    </location>
    <ligand>
        <name>Ca(2+)</name>
        <dbReference type="ChEBI" id="CHEBI:29108"/>
        <label>2</label>
    </ligand>
</feature>
<feature type="binding site" evidence="3">
    <location>
        <position position="2325"/>
    </location>
    <ligand>
        <name>Ca(2+)</name>
        <dbReference type="ChEBI" id="CHEBI:29108"/>
        <label>2</label>
    </ligand>
</feature>
<feature type="binding site" evidence="3">
    <location>
        <position position="2327"/>
    </location>
    <ligand>
        <name>Ca(2+)</name>
        <dbReference type="ChEBI" id="CHEBI:29108"/>
        <label>2</label>
    </ligand>
</feature>
<feature type="binding site" evidence="3">
    <location>
        <position position="2332"/>
    </location>
    <ligand>
        <name>Ca(2+)</name>
        <dbReference type="ChEBI" id="CHEBI:29108"/>
        <label>2</label>
    </ligand>
</feature>
<feature type="modified residue" description="Phosphoserine" evidence="6">
    <location>
        <position position="1032"/>
    </location>
</feature>
<feature type="modified residue" description="Phosphoserine" evidence="5 6">
    <location>
        <position position="1034"/>
    </location>
</feature>
<feature type="sequence conflict" description="In Ref. 5; AAB29441." evidence="13" ref="5">
    <original>Q</original>
    <variation>D</variation>
    <location>
        <position position="110"/>
    </location>
</feature>
<feature type="sequence conflict" description="In Ref. 4; ABA81823." evidence="13" ref="4">
    <original>N</original>
    <variation>I</variation>
    <location>
        <position position="212"/>
    </location>
</feature>
<feature type="sequence conflict" description="In Ref. 4; ABA81823." evidence="13" ref="4">
    <original>D</original>
    <variation>G</variation>
    <location>
        <position position="337"/>
    </location>
</feature>
<feature type="sequence conflict" description="In Ref. 4; ABA81823." evidence="13" ref="4">
    <original>Q</original>
    <variation>L</variation>
    <location>
        <position position="651"/>
    </location>
</feature>
<feature type="sequence conflict" description="In Ref. 6; AAL39886." evidence="13" ref="6">
    <original>Q</original>
    <variation>H</variation>
    <location>
        <position position="1555"/>
    </location>
</feature>
<feature type="sequence conflict" description="In Ref. 4; ABA81823." evidence="13" ref="4">
    <original>G</original>
    <variation>E</variation>
    <location>
        <position position="1562"/>
    </location>
</feature>
<feature type="sequence conflict" description="In Ref. 1; AAA28907." evidence="13" ref="1">
    <original>Q</original>
    <variation>R</variation>
    <location>
        <position position="1668"/>
    </location>
</feature>
<feature type="sequence conflict" description="In Ref. 4; ABA81823." evidence="13" ref="4">
    <original>N</original>
    <variation>S</variation>
    <location>
        <position position="1908"/>
    </location>
</feature>
<feature type="sequence conflict" description="In Ref. 4; ABA81823." evidence="13" ref="4">
    <original>D</original>
    <variation>G</variation>
    <location>
        <position position="2203"/>
    </location>
</feature>
<feature type="helix" evidence="14">
    <location>
        <begin position="1393"/>
        <end position="1422"/>
    </location>
</feature>
<feature type="helix" evidence="14">
    <location>
        <begin position="1428"/>
        <end position="1494"/>
    </location>
</feature>
<accession>P13395</accession>
<accession>Q26340</accession>
<accession>Q3KN50</accession>
<accession>Q8SZW7</accession>
<accession>Q9W085</accession>
<name>SPTCA_DROME</name>
<reference key="1">
    <citation type="journal article" date="1989" name="J. Cell Biol.">
        <title>The complete sequence of Drosophila alpha-spectrin: conservation of structural domains between alpha-spectrins and alpha-actinin.</title>
        <authorList>
            <person name="Dubreuil R.R."/>
            <person name="Byers T.J."/>
            <person name="Sillman A.L."/>
            <person name="Bar-Zvi D."/>
            <person name="Goldstein L.S.B."/>
            <person name="Branton D."/>
        </authorList>
    </citation>
    <scope>NUCLEOTIDE SEQUENCE [MRNA]</scope>
</reference>
<reference key="2">
    <citation type="journal article" date="2000" name="Science">
        <title>The genome sequence of Drosophila melanogaster.</title>
        <authorList>
            <person name="Adams M.D."/>
            <person name="Celniker S.E."/>
            <person name="Holt R.A."/>
            <person name="Evans C.A."/>
            <person name="Gocayne J.D."/>
            <person name="Amanatides P.G."/>
            <person name="Scherer S.E."/>
            <person name="Li P.W."/>
            <person name="Hoskins R.A."/>
            <person name="Galle R.F."/>
            <person name="George R.A."/>
            <person name="Lewis S.E."/>
            <person name="Richards S."/>
            <person name="Ashburner M."/>
            <person name="Henderson S.N."/>
            <person name="Sutton G.G."/>
            <person name="Wortman J.R."/>
            <person name="Yandell M.D."/>
            <person name="Zhang Q."/>
            <person name="Chen L.X."/>
            <person name="Brandon R.C."/>
            <person name="Rogers Y.-H.C."/>
            <person name="Blazej R.G."/>
            <person name="Champe M."/>
            <person name="Pfeiffer B.D."/>
            <person name="Wan K.H."/>
            <person name="Doyle C."/>
            <person name="Baxter E.G."/>
            <person name="Helt G."/>
            <person name="Nelson C.R."/>
            <person name="Miklos G.L.G."/>
            <person name="Abril J.F."/>
            <person name="Agbayani A."/>
            <person name="An H.-J."/>
            <person name="Andrews-Pfannkoch C."/>
            <person name="Baldwin D."/>
            <person name="Ballew R.M."/>
            <person name="Basu A."/>
            <person name="Baxendale J."/>
            <person name="Bayraktaroglu L."/>
            <person name="Beasley E.M."/>
            <person name="Beeson K.Y."/>
            <person name="Benos P.V."/>
            <person name="Berman B.P."/>
            <person name="Bhandari D."/>
            <person name="Bolshakov S."/>
            <person name="Borkova D."/>
            <person name="Botchan M.R."/>
            <person name="Bouck J."/>
            <person name="Brokstein P."/>
            <person name="Brottier P."/>
            <person name="Burtis K.C."/>
            <person name="Busam D.A."/>
            <person name="Butler H."/>
            <person name="Cadieu E."/>
            <person name="Center A."/>
            <person name="Chandra I."/>
            <person name="Cherry J.M."/>
            <person name="Cawley S."/>
            <person name="Dahlke C."/>
            <person name="Davenport L.B."/>
            <person name="Davies P."/>
            <person name="de Pablos B."/>
            <person name="Delcher A."/>
            <person name="Deng Z."/>
            <person name="Mays A.D."/>
            <person name="Dew I."/>
            <person name="Dietz S.M."/>
            <person name="Dodson K."/>
            <person name="Doup L.E."/>
            <person name="Downes M."/>
            <person name="Dugan-Rocha S."/>
            <person name="Dunkov B.C."/>
            <person name="Dunn P."/>
            <person name="Durbin K.J."/>
            <person name="Evangelista C.C."/>
            <person name="Ferraz C."/>
            <person name="Ferriera S."/>
            <person name="Fleischmann W."/>
            <person name="Fosler C."/>
            <person name="Gabrielian A.E."/>
            <person name="Garg N.S."/>
            <person name="Gelbart W.M."/>
            <person name="Glasser K."/>
            <person name="Glodek A."/>
            <person name="Gong F."/>
            <person name="Gorrell J.H."/>
            <person name="Gu Z."/>
            <person name="Guan P."/>
            <person name="Harris M."/>
            <person name="Harris N.L."/>
            <person name="Harvey D.A."/>
            <person name="Heiman T.J."/>
            <person name="Hernandez J.R."/>
            <person name="Houck J."/>
            <person name="Hostin D."/>
            <person name="Houston K.A."/>
            <person name="Howland T.J."/>
            <person name="Wei M.-H."/>
            <person name="Ibegwam C."/>
            <person name="Jalali M."/>
            <person name="Kalush F."/>
            <person name="Karpen G.H."/>
            <person name="Ke Z."/>
            <person name="Kennison J.A."/>
            <person name="Ketchum K.A."/>
            <person name="Kimmel B.E."/>
            <person name="Kodira C.D."/>
            <person name="Kraft C.L."/>
            <person name="Kravitz S."/>
            <person name="Kulp D."/>
            <person name="Lai Z."/>
            <person name="Lasko P."/>
            <person name="Lei Y."/>
            <person name="Levitsky A.A."/>
            <person name="Li J.H."/>
            <person name="Li Z."/>
            <person name="Liang Y."/>
            <person name="Lin X."/>
            <person name="Liu X."/>
            <person name="Mattei B."/>
            <person name="McIntosh T.C."/>
            <person name="McLeod M.P."/>
            <person name="McPherson D."/>
            <person name="Merkulov G."/>
            <person name="Milshina N.V."/>
            <person name="Mobarry C."/>
            <person name="Morris J."/>
            <person name="Moshrefi A."/>
            <person name="Mount S.M."/>
            <person name="Moy M."/>
            <person name="Murphy B."/>
            <person name="Murphy L."/>
            <person name="Muzny D.M."/>
            <person name="Nelson D.L."/>
            <person name="Nelson D.R."/>
            <person name="Nelson K.A."/>
            <person name="Nixon K."/>
            <person name="Nusskern D.R."/>
            <person name="Pacleb J.M."/>
            <person name="Palazzolo M."/>
            <person name="Pittman G.S."/>
            <person name="Pan S."/>
            <person name="Pollard J."/>
            <person name="Puri V."/>
            <person name="Reese M.G."/>
            <person name="Reinert K."/>
            <person name="Remington K."/>
            <person name="Saunders R.D.C."/>
            <person name="Scheeler F."/>
            <person name="Shen H."/>
            <person name="Shue B.C."/>
            <person name="Siden-Kiamos I."/>
            <person name="Simpson M."/>
            <person name="Skupski M.P."/>
            <person name="Smith T.J."/>
            <person name="Spier E."/>
            <person name="Spradling A.C."/>
            <person name="Stapleton M."/>
            <person name="Strong R."/>
            <person name="Sun E."/>
            <person name="Svirskas R."/>
            <person name="Tector C."/>
            <person name="Turner R."/>
            <person name="Venter E."/>
            <person name="Wang A.H."/>
            <person name="Wang X."/>
            <person name="Wang Z.-Y."/>
            <person name="Wassarman D.A."/>
            <person name="Weinstock G.M."/>
            <person name="Weissenbach J."/>
            <person name="Williams S.M."/>
            <person name="Woodage T."/>
            <person name="Worley K.C."/>
            <person name="Wu D."/>
            <person name="Yang S."/>
            <person name="Yao Q.A."/>
            <person name="Ye J."/>
            <person name="Yeh R.-F."/>
            <person name="Zaveri J.S."/>
            <person name="Zhan M."/>
            <person name="Zhang G."/>
            <person name="Zhao Q."/>
            <person name="Zheng L."/>
            <person name="Zheng X.H."/>
            <person name="Zhong F.N."/>
            <person name="Zhong W."/>
            <person name="Zhou X."/>
            <person name="Zhu S.C."/>
            <person name="Zhu X."/>
            <person name="Smith H.O."/>
            <person name="Gibbs R.A."/>
            <person name="Myers E.W."/>
            <person name="Rubin G.M."/>
            <person name="Venter J.C."/>
        </authorList>
    </citation>
    <scope>NUCLEOTIDE SEQUENCE [LARGE SCALE GENOMIC DNA]</scope>
    <source>
        <strain>Berkeley</strain>
    </source>
</reference>
<reference key="3">
    <citation type="journal article" date="2002" name="Genome Biol.">
        <title>Annotation of the Drosophila melanogaster euchromatic genome: a systematic review.</title>
        <authorList>
            <person name="Misra S."/>
            <person name="Crosby M.A."/>
            <person name="Mungall C.J."/>
            <person name="Matthews B.B."/>
            <person name="Campbell K.S."/>
            <person name="Hradecky P."/>
            <person name="Huang Y."/>
            <person name="Kaminker J.S."/>
            <person name="Millburn G.H."/>
            <person name="Prochnik S.E."/>
            <person name="Smith C.D."/>
            <person name="Tupy J.L."/>
            <person name="Whitfield E.J."/>
            <person name="Bayraktaroglu L."/>
            <person name="Berman B.P."/>
            <person name="Bettencourt B.R."/>
            <person name="Celniker S.E."/>
            <person name="de Grey A.D.N.J."/>
            <person name="Drysdale R.A."/>
            <person name="Harris N.L."/>
            <person name="Richter J."/>
            <person name="Russo S."/>
            <person name="Schroeder A.J."/>
            <person name="Shu S.Q."/>
            <person name="Stapleton M."/>
            <person name="Yamada C."/>
            <person name="Ashburner M."/>
            <person name="Gelbart W.M."/>
            <person name="Rubin G.M."/>
            <person name="Lewis S.E."/>
        </authorList>
    </citation>
    <scope>GENOME REANNOTATION</scope>
    <source>
        <strain>Berkeley</strain>
    </source>
</reference>
<reference key="4">
    <citation type="submission" date="2005-10" db="EMBL/GenBank/DDBJ databases">
        <authorList>
            <person name="Stapleton M."/>
            <person name="Carlson J.W."/>
            <person name="Chavez C."/>
            <person name="Frise E."/>
            <person name="George R.A."/>
            <person name="Pacleb J.M."/>
            <person name="Park S."/>
            <person name="Wan K.H."/>
            <person name="Yu C."/>
            <person name="Celniker S.E."/>
        </authorList>
    </citation>
    <scope>NUCLEOTIDE SEQUENCE [LARGE SCALE MRNA]</scope>
    <source>
        <strain>Berkeley</strain>
        <tissue>Embryo</tissue>
    </source>
</reference>
<reference key="5">
    <citation type="journal article" date="1993" name="J. Cell Biol.">
        <title>Cell shape and interaction defects in alpha-spectrin mutants of Drosophila melanogaster.</title>
        <authorList>
            <person name="Lee J.K."/>
            <person name="Coyne R.S."/>
            <person name="Dubreuil R.R."/>
            <person name="Goldstein L.S.B."/>
            <person name="Branton D."/>
        </authorList>
    </citation>
    <scope>NUCLEOTIDE SEQUENCE [GENOMIC DNA] OF 1-150 AND 2192-2415</scope>
    <scope>FUNCTION</scope>
</reference>
<reference key="6">
    <citation type="journal article" date="2002" name="Genome Biol.">
        <title>A Drosophila full-length cDNA resource.</title>
        <authorList>
            <person name="Stapleton M."/>
            <person name="Carlson J.W."/>
            <person name="Brokstein P."/>
            <person name="Yu C."/>
            <person name="Champe M."/>
            <person name="George R.A."/>
            <person name="Guarin H."/>
            <person name="Kronmiller B."/>
            <person name="Pacleb J.M."/>
            <person name="Park S."/>
            <person name="Wan K.H."/>
            <person name="Rubin G.M."/>
            <person name="Celniker S.E."/>
        </authorList>
    </citation>
    <scope>NUCLEOTIDE SEQUENCE [LARGE SCALE MRNA] OF 1539-2415</scope>
    <source>
        <strain>Berkeley</strain>
        <tissue>Larva</tissue>
        <tissue>Pupae</tissue>
    </source>
</reference>
<reference key="7">
    <citation type="journal article" date="1987" name="J. Cell Biol.">
        <title>Drosophilia spectrin. I. Characterization of the purified protein.</title>
        <authorList>
            <person name="Dubreuil R."/>
            <person name="Byers T.J."/>
            <person name="Branton D."/>
            <person name="Goldstein L.S.B."/>
            <person name="Kiehart D.P."/>
        </authorList>
    </citation>
    <scope>FUNCTION</scope>
</reference>
<reference key="8">
    <citation type="journal article" date="1997" name="Dev. Biol.">
        <title>The Drosophila ovarian tumor gene is required for the organization of actin filaments during multiple stages in oogenesis.</title>
        <authorList>
            <person name="Rodesch C."/>
            <person name="Pettus J."/>
            <person name="Nagoshi R.N."/>
        </authorList>
    </citation>
    <scope>SUBCELLULAR LOCATION</scope>
</reference>
<reference key="9">
    <citation type="journal article" date="2000" name="J. Cell Biol.">
        <title>Lava lamp, a novel peripheral Golgi protein, is required for Drosophila melanogaster cellularization.</title>
        <authorList>
            <person name="Sisson J.C."/>
            <person name="Field C."/>
            <person name="Ventura R."/>
            <person name="Royou A."/>
            <person name="Sullivan W."/>
        </authorList>
    </citation>
    <scope>FUNCTION</scope>
    <scope>SUBUNIT</scope>
    <scope>SUBCELLULAR LOCATION</scope>
</reference>
<reference key="10">
    <citation type="journal article" date="1989" name="J. Cell Biol.">
        <title>Drosophila spectrin: the membrane skeleton during embryogenesis.</title>
        <authorList>
            <person name="Pesacreta T.C."/>
            <person name="Byers T.J."/>
            <person name="Dubreuil R."/>
            <person name="Kiehart D.P."/>
            <person name="Branton D."/>
        </authorList>
    </citation>
    <scope>TISSUE SPECIFICITY</scope>
</reference>
<reference key="11">
    <citation type="journal article" date="2003" name="Dev. Cell">
        <title>The Drosophila cell survival gene discs lost encodes a cytoplasmic Codanin-1-like protein, not a homolog of tight junction PDZ protein Patj.</title>
        <authorList>
            <person name="Pielage J."/>
            <person name="Stork T."/>
            <person name="Bunse I."/>
            <person name="Klaembt C."/>
        </authorList>
    </citation>
    <scope>GENE STRUCTURE</scope>
</reference>
<reference key="12">
    <citation type="journal article" date="2007" name="Mol. Biosyst.">
        <title>An integrated chemical, mass spectrometric and computational strategy for (quantitative) phosphoproteomics: application to Drosophila melanogaster Kc167 cells.</title>
        <authorList>
            <person name="Bodenmiller B."/>
            <person name="Mueller L.N."/>
            <person name="Pedrioli P.G.A."/>
            <person name="Pflieger D."/>
            <person name="Juenger M.A."/>
            <person name="Eng J.K."/>
            <person name="Aebersold R."/>
            <person name="Tao W.A."/>
        </authorList>
    </citation>
    <scope>PHOSPHORYLATION [LARGE SCALE ANALYSIS] AT SER-1034</scope>
    <scope>IDENTIFICATION BY MASS SPECTROMETRY</scope>
</reference>
<reference key="13">
    <citation type="journal article" date="2008" name="J. Proteome Res.">
        <title>Phosphoproteome analysis of Drosophila melanogaster embryos.</title>
        <authorList>
            <person name="Zhai B."/>
            <person name="Villen J."/>
            <person name="Beausoleil S.A."/>
            <person name="Mintseris J."/>
            <person name="Gygi S.P."/>
        </authorList>
    </citation>
    <scope>PHOSPHORYLATION [LARGE SCALE ANALYSIS] AT SER-1032 AND SER-1034</scope>
    <scope>IDENTIFICATION BY MASS SPECTROMETRY</scope>
    <source>
        <tissue>Embryo</tissue>
    </source>
</reference>
<reference key="14">
    <citation type="journal article" date="2010" name="Mol. Biol. Cell">
        <title>Phosphatidylinositol 4,5-bisphosphate directs spermatid cell polarity and exocyst localization in Drosophila.</title>
        <authorList>
            <person name="Fabian L."/>
            <person name="Wei H.C."/>
            <person name="Rollins J."/>
            <person name="Noguchi T."/>
            <person name="Blankenship J.T."/>
            <person name="Bellamkonda K."/>
            <person name="Polevoy G."/>
            <person name="Gervais L."/>
            <person name="Guichet A."/>
            <person name="Fuller M.T."/>
            <person name="Brill J.A."/>
        </authorList>
    </citation>
    <scope>SUBCELLULAR LOCATION</scope>
    <scope>DEVELOPMENTAL STAGE</scope>
</reference>
<reference key="15">
    <citation type="journal article" date="2012" name="Nature">
        <title>Trans-synaptic Teneurin signalling in neuromuscular synapse organization and target choice.</title>
        <authorList>
            <person name="Mosca T.J."/>
            <person name="Hong W."/>
            <person name="Dani V.S."/>
            <person name="Favaloro V."/>
            <person name="Luo L."/>
        </authorList>
    </citation>
    <scope>INTERACTION WITH TEN-M</scope>
</reference>
<reference key="16">
    <citation type="journal article" date="1993" name="Science">
        <title>Crystal structure of the repetitive segments of spectrin.</title>
        <authorList>
            <person name="Yan Y."/>
            <person name="Winograd E."/>
            <person name="Viel A."/>
            <person name="Cronin T."/>
            <person name="Harrison S.C."/>
            <person name="Branton D."/>
        </authorList>
    </citation>
    <scope>X-RAY CRYSTALLOGRAPHY (1.8 ANGSTROMS) OF 1391-1497</scope>
</reference>
<evidence type="ECO:0000255" key="1"/>
<evidence type="ECO:0000255" key="2">
    <source>
        <dbReference type="PROSITE-ProRule" id="PRU00192"/>
    </source>
</evidence>
<evidence type="ECO:0000255" key="3">
    <source>
        <dbReference type="PROSITE-ProRule" id="PRU00448"/>
    </source>
</evidence>
<evidence type="ECO:0000269" key="4">
    <source>
    </source>
</evidence>
<evidence type="ECO:0000269" key="5">
    <source>
    </source>
</evidence>
<evidence type="ECO:0000269" key="6">
    <source>
    </source>
</evidence>
<evidence type="ECO:0000269" key="7">
    <source>
    </source>
</evidence>
<evidence type="ECO:0000269" key="8">
    <source>
    </source>
</evidence>
<evidence type="ECO:0000269" key="9">
    <source>
    </source>
</evidence>
<evidence type="ECO:0000269" key="10">
    <source>
    </source>
</evidence>
<evidence type="ECO:0000269" key="11">
    <source>
    </source>
</evidence>
<evidence type="ECO:0000269" key="12">
    <source>
    </source>
</evidence>
<evidence type="ECO:0000305" key="13"/>
<evidence type="ECO:0007829" key="14">
    <source>
        <dbReference type="PDB" id="2SPC"/>
    </source>
</evidence>
<keyword id="KW-0002">3D-structure</keyword>
<keyword id="KW-0117">Actin capping</keyword>
<keyword id="KW-0009">Actin-binding</keyword>
<keyword id="KW-0106">Calcium</keyword>
<keyword id="KW-0112">Calmodulin-binding</keyword>
<keyword id="KW-0966">Cell projection</keyword>
<keyword id="KW-0133">Cell shape</keyword>
<keyword id="KW-0969">Cilium</keyword>
<keyword id="KW-0963">Cytoplasm</keyword>
<keyword id="KW-0206">Cytoskeleton</keyword>
<keyword id="KW-0282">Flagellum</keyword>
<keyword id="KW-0333">Golgi apparatus</keyword>
<keyword id="KW-0479">Metal-binding</keyword>
<keyword id="KW-0597">Phosphoprotein</keyword>
<keyword id="KW-1185">Reference proteome</keyword>
<keyword id="KW-0677">Repeat</keyword>
<keyword id="KW-0728">SH3 domain</keyword>
<gene>
    <name type="primary">alpha-Spec</name>
    <name type="synonym">SPEC-A</name>
    <name type="ORF">CG1977</name>
</gene>
<sequence length="2415" mass="278303">MENFTPKEVKILETVEDIQERREQVLSRYNDFKIETRQKREKLEDSRRFQYFKRDADELESWIHEKLQAASEESYRDPTNLQAKIQKHQAFEAEVSAHSNAIVSLDNTGQEMINQQHFASESIQVRLDELHKLWELLLSRLAEKGLKLQQALVLVQFLRQCEEVMFWIKDKETFVTADEFGQDLEHVEVLQRKFDEFQKDMASQEYRVTEVNQLADKLVQDGHPERDTITKRKEELNEAWQRLKQLAIVRQEKLFGAHEIQRFNRDADETVAWIAEKDVVLSSDDYGRDLASVQALQRKHEGVERDLAALEDKVSTLGAEAQRLCSIHADHSDQIRDKQAEIANYWQSLTTKARERKQKLDESYYLHRFLADFRDLVSWINGMKAIISADELAKDVAGAEALLERHQEHKGEIDAREDSFKLTTESGQKLLEREHYAAAEIQEKLAALENDKSSLLSLWEDRRILYEQCMDLQLFYRDTEQADTWMAKQEAFLANEDLGDSLDSVEALIKKHEDFEKSLAAQEEKIKALDIFATKLIDGQHYAADDVAQRRQMLLARRAALQEKSSKRRQLLEDSNRYQQFERDCDETKGWISEKLKFATDDSYLDPTNLNGKMQKHQNFEHELNANKSRIEDITNVGTELIEKQHYAADQINTRMQEIVVLWETLVQASDKKGTKLNEACQQQQFNRTIEDIELWLSEIEGQLLSEDHGKDLTSVQNLQKKHALLEADVMAHQDRIESIKVAANKFIESGHFDADNIRNKEGNLSARYAALAAPMGERKQHLLDSLQVQQLFRDLEDEAAWIREKEPIAASTNRGRDLIGVQNLIKKHQAVLAEINNHEARLLNVISSGENMLKDQPFASDDIRQRLEALQEQWNTLKEKSSQRKQDLDDSLQAHQYFADANEAESWMREKEPIATGSDYGKDEDSSEALLKKHEALVSDLEAFGNTIQALQEQAKNCRQQETPVVDITGKECVVALYDYTEKSPREVSMKKGDVLTLLNSNNKDWWKVEVNDRQGFVPAAYIKKIDAGLSASQQNLVDNHSIAKRQNQINSQYDNLLALARERQNKLNETVKAYVLVREAADLAQWIRDKENHAQIADVVGEDLEEVEVLQKKFDDFNDDLKANEVRLANMNEIAVQLTSLGQTEAALKIQTQMQDLNEKWNNLQTLTAEKASQLGSAHEVQRFHRDIDETKDWIAEKANALNNDDLGKDLRSVQTLQRKHEGVERDLAALRDKIRQLDETANRLMQSHPDTAEQTYAKQKEINEMWDQIITKSTARKEKLLDSYDLQRFLSDYRDLLAWINSMMSLVTSDELANDVTGAEALIERHQEHRTEIDARAGTFGAFEQFGNELLQANHYASPEIKEKIEDLAKAREDLEKAWTERRLQLEQNLDLQLYMRDCELAESWMSAREAFLNADDDANAGGNVEALIKKHEDFDKAINGHEQKIAALQTVADQLIAQNHYASNLVDEKRKQVLERWRHLKEGLIEKRSRLGDEQTLQQFSRDADEIENWIAEKLQLATEESYKDPANIQSKHQKHQAFEAELAANADRIQSVLAMGGNLIDKKQCSGSEDAVQKRLTQIADQWEYLTHKTTEKSLKLKEANKQRTYIAAVKDLDFWLGEVESLLTTEDSGKDLASVQNLMKKHQLVEADIVAHEDRIKDMNNQADSLVESGQFDTAGIQEKRQSINERYERICNLAAHRQARLNEALTLHQFFRDIADEESWIKEKKLLVGSDDYGRDLTGVQNLKKKHKRLEAELGSHEPAIQAVQEAGEKLMDVSNLGVPEIEQRLKALNQAWAELKNLAATRGQKLDESLTYQQFLAQVEEEEAWITEKQQLLSVEDYGDSMAAVQGLLKKHDAFETDFTAHKDRCSLICDQGSELVEAKNHHGESIAQRCQQLRLKLDNLSALAARRKGALLDNSAYLQFMWKADVVESWIDDKENYVRSDEFGRDLSTVQTLLTKQETFDAGLNAFEQEGIHNITALKDQLINASHAQSPAILKRHGDVIARWQKLRDASNTRKDRLLAMQEQFRQIEELYLTFAKKASAFNSWFENAEEDLTDPVRCNSIEEIRALRDAHAQFQASLSSAEADFKALAALDQKIKSFNVGPNPYTWFTMEALEETWRNLQKIIEERDGELAKEAKRQEENDKLRKEFAKHANLFHQWLTETRTSMMEGSGSLEQQLEALRVKATEVRARRVDLKKIEELGALLEEHLILDNRYTEHSTVGLAQQWDQLDQLSMRMQHNLEQQIQARNHSGVSEDSLKEFSMMFKHFDKDKSGKLNHQEFKSCLRALGYDLPMVEEGQPDPEFEAILDVVDPNRDGYVSLQEYIAFMISKETENVQSYEEIENAFRAITAADRPYVTKEELYCNLTKDMADYCVQRMKPFSEPRSGQPIKDALDYIDFTRTLFQN</sequence>
<dbReference type="EMBL" id="M26400">
    <property type="protein sequence ID" value="AAA28907.1"/>
    <property type="molecule type" value="mRNA"/>
</dbReference>
<dbReference type="EMBL" id="AE014296">
    <property type="protein sequence ID" value="AAF47569.1"/>
    <property type="molecule type" value="Genomic_DNA"/>
</dbReference>
<dbReference type="EMBL" id="BT023889">
    <property type="protein sequence ID" value="ABA81823.1"/>
    <property type="status" value="ALT_FRAME"/>
    <property type="molecule type" value="mRNA"/>
</dbReference>
<dbReference type="EMBL" id="S67762">
    <property type="protein sequence ID" value="AAB29441.2"/>
    <property type="molecule type" value="Genomic_DNA"/>
</dbReference>
<dbReference type="EMBL" id="S67765">
    <property type="protein sequence ID" value="AAB29442.1"/>
    <property type="molecule type" value="Genomic_DNA"/>
</dbReference>
<dbReference type="EMBL" id="AY069741">
    <property type="protein sequence ID" value="AAL39886.1"/>
    <property type="status" value="ALT_INIT"/>
    <property type="molecule type" value="mRNA"/>
</dbReference>
<dbReference type="PIR" id="A33733">
    <property type="entry name" value="A33733"/>
</dbReference>
<dbReference type="RefSeq" id="NP_476739.1">
    <property type="nucleotide sequence ID" value="NM_057391.4"/>
</dbReference>
<dbReference type="PDB" id="2SPC">
    <property type="method" value="X-ray"/>
    <property type="resolution" value="1.80 A"/>
    <property type="chains" value="A/B=1391-1497"/>
</dbReference>
<dbReference type="PDBsum" id="2SPC"/>
<dbReference type="SMR" id="P13395"/>
<dbReference type="BioGRID" id="63763">
    <property type="interactions" value="46"/>
</dbReference>
<dbReference type="DIP" id="DIP-17516N"/>
<dbReference type="FunCoup" id="P13395">
    <property type="interactions" value="1147"/>
</dbReference>
<dbReference type="IntAct" id="P13395">
    <property type="interactions" value="23"/>
</dbReference>
<dbReference type="STRING" id="7227.FBpp0305100"/>
<dbReference type="iPTMnet" id="P13395"/>
<dbReference type="PaxDb" id="7227-FBpp0305100"/>
<dbReference type="EnsemblMetazoa" id="FBtr0072789">
    <property type="protein sequence ID" value="FBpp0072672"/>
    <property type="gene ID" value="FBgn0250789"/>
</dbReference>
<dbReference type="GeneID" id="38231"/>
<dbReference type="KEGG" id="dme:Dmel_CG1977"/>
<dbReference type="AGR" id="FB:FBgn0250789"/>
<dbReference type="CTD" id="38231"/>
<dbReference type="FlyBase" id="FBgn0250789">
    <property type="gene designation" value="alpha-Spec"/>
</dbReference>
<dbReference type="VEuPathDB" id="VectorBase:FBgn0250789"/>
<dbReference type="eggNOG" id="KOG0040">
    <property type="taxonomic scope" value="Eukaryota"/>
</dbReference>
<dbReference type="GeneTree" id="ENSGT00940000156662"/>
<dbReference type="HOGENOM" id="CLU_000847_0_0_1"/>
<dbReference type="InParanoid" id="P13395"/>
<dbReference type="OrthoDB" id="6018565at2759"/>
<dbReference type="PhylomeDB" id="P13395"/>
<dbReference type="Reactome" id="R-DME-264870">
    <property type="pathway name" value="Caspase-mediated cleavage of cytoskeletal proteins"/>
</dbReference>
<dbReference type="Reactome" id="R-DME-375165">
    <property type="pathway name" value="NCAM signaling for neurite out-growth"/>
</dbReference>
<dbReference type="Reactome" id="R-DME-5673001">
    <property type="pathway name" value="RAF/MAP kinase cascade"/>
</dbReference>
<dbReference type="Reactome" id="R-DME-6798695">
    <property type="pathway name" value="Neutrophil degranulation"/>
</dbReference>
<dbReference type="Reactome" id="R-DME-6807878">
    <property type="pathway name" value="COPI-mediated anterograde transport"/>
</dbReference>
<dbReference type="Reactome" id="R-DME-9013420">
    <property type="pathway name" value="RHOU GTPase cycle"/>
</dbReference>
<dbReference type="Reactome" id="R-DME-9013424">
    <property type="pathway name" value="RHOV GTPase cycle"/>
</dbReference>
<dbReference type="SignaLink" id="P13395"/>
<dbReference type="BioGRID-ORCS" id="38231">
    <property type="hits" value="0 hits in 3 CRISPR screens"/>
</dbReference>
<dbReference type="EvolutionaryTrace" id="P13395"/>
<dbReference type="GenomeRNAi" id="38231"/>
<dbReference type="PRO" id="PR:P13395"/>
<dbReference type="Proteomes" id="UP000000803">
    <property type="component" value="Chromosome 3L"/>
</dbReference>
<dbReference type="Bgee" id="FBgn0250789">
    <property type="expression patterns" value="Expressed in lamina monopolar neuron L1 (Drosophila) in insect head and 301 other cell types or tissues"/>
</dbReference>
<dbReference type="ExpressionAtlas" id="P13395">
    <property type="expression patterns" value="baseline and differential"/>
</dbReference>
<dbReference type="GO" id="GO:0016324">
    <property type="term" value="C:apical plasma membrane"/>
    <property type="evidence" value="ECO:0000314"/>
    <property type="project" value="FlyBase"/>
</dbReference>
<dbReference type="GO" id="GO:0016323">
    <property type="term" value="C:basolateral plasma membrane"/>
    <property type="evidence" value="ECO:0000314"/>
    <property type="project" value="FlyBase"/>
</dbReference>
<dbReference type="GO" id="GO:0005938">
    <property type="term" value="C:cell cortex"/>
    <property type="evidence" value="ECO:0000314"/>
    <property type="project" value="FlyBase"/>
</dbReference>
<dbReference type="GO" id="GO:0030054">
    <property type="term" value="C:cell junction"/>
    <property type="evidence" value="ECO:0000318"/>
    <property type="project" value="GO_Central"/>
</dbReference>
<dbReference type="GO" id="GO:0042995">
    <property type="term" value="C:cell projection"/>
    <property type="evidence" value="ECO:0000318"/>
    <property type="project" value="GO_Central"/>
</dbReference>
<dbReference type="GO" id="GO:0030864">
    <property type="term" value="C:cortical actin cytoskeleton"/>
    <property type="evidence" value="ECO:0000318"/>
    <property type="project" value="GO_Central"/>
</dbReference>
<dbReference type="GO" id="GO:0045169">
    <property type="term" value="C:fusome"/>
    <property type="evidence" value="ECO:0000314"/>
    <property type="project" value="FlyBase"/>
</dbReference>
<dbReference type="GO" id="GO:0005794">
    <property type="term" value="C:Golgi apparatus"/>
    <property type="evidence" value="ECO:0000314"/>
    <property type="project" value="FlyBase"/>
</dbReference>
<dbReference type="GO" id="GO:0016328">
    <property type="term" value="C:lateral plasma membrane"/>
    <property type="evidence" value="ECO:0000314"/>
    <property type="project" value="FlyBase"/>
</dbReference>
<dbReference type="GO" id="GO:0031514">
    <property type="term" value="C:motile cilium"/>
    <property type="evidence" value="ECO:0007669"/>
    <property type="project" value="UniProtKB-SubCell"/>
</dbReference>
<dbReference type="GO" id="GO:0031594">
    <property type="term" value="C:neuromuscular junction"/>
    <property type="evidence" value="ECO:0000314"/>
    <property type="project" value="FlyBase"/>
</dbReference>
<dbReference type="GO" id="GO:0005886">
    <property type="term" value="C:plasma membrane"/>
    <property type="evidence" value="ECO:0000314"/>
    <property type="project" value="FlyBase"/>
</dbReference>
<dbReference type="GO" id="GO:0045170">
    <property type="term" value="C:spectrosome"/>
    <property type="evidence" value="ECO:0000314"/>
    <property type="project" value="FlyBase"/>
</dbReference>
<dbReference type="GO" id="GO:0003779">
    <property type="term" value="F:actin binding"/>
    <property type="evidence" value="ECO:0000314"/>
    <property type="project" value="FlyBase"/>
</dbReference>
<dbReference type="GO" id="GO:0051015">
    <property type="term" value="F:actin filament binding"/>
    <property type="evidence" value="ECO:0000318"/>
    <property type="project" value="GO_Central"/>
</dbReference>
<dbReference type="GO" id="GO:0005509">
    <property type="term" value="F:calcium ion binding"/>
    <property type="evidence" value="ECO:0007669"/>
    <property type="project" value="InterPro"/>
</dbReference>
<dbReference type="GO" id="GO:0005516">
    <property type="term" value="F:calmodulin binding"/>
    <property type="evidence" value="ECO:0007669"/>
    <property type="project" value="UniProtKB-KW"/>
</dbReference>
<dbReference type="GO" id="GO:0008017">
    <property type="term" value="F:microtubule binding"/>
    <property type="evidence" value="ECO:0000314"/>
    <property type="project" value="FlyBase"/>
</dbReference>
<dbReference type="GO" id="GO:0030036">
    <property type="term" value="P:actin cytoskeleton organization"/>
    <property type="evidence" value="ECO:0000318"/>
    <property type="project" value="GO_Central"/>
</dbReference>
<dbReference type="GO" id="GO:0051693">
    <property type="term" value="P:actin filament capping"/>
    <property type="evidence" value="ECO:0007669"/>
    <property type="project" value="UniProtKB-KW"/>
</dbReference>
<dbReference type="GO" id="GO:0016199">
    <property type="term" value="P:axon midline choice point recognition"/>
    <property type="evidence" value="ECO:0000316"/>
    <property type="project" value="FlyBase"/>
</dbReference>
<dbReference type="GO" id="GO:0007417">
    <property type="term" value="P:central nervous system development"/>
    <property type="evidence" value="ECO:0000315"/>
    <property type="project" value="FlyBase"/>
</dbReference>
<dbReference type="GO" id="GO:0007010">
    <property type="term" value="P:cytoskeleton organization"/>
    <property type="evidence" value="ECO:0000315"/>
    <property type="project" value="FlyBase"/>
</dbReference>
<dbReference type="GO" id="GO:0045478">
    <property type="term" value="P:fusome organization"/>
    <property type="evidence" value="ECO:0000304"/>
    <property type="project" value="FlyBase"/>
</dbReference>
<dbReference type="GO" id="GO:0030727">
    <property type="term" value="P:germarium-derived female germ-line cyst formation"/>
    <property type="evidence" value="ECO:0000315"/>
    <property type="project" value="FlyBase"/>
</dbReference>
<dbReference type="GO" id="GO:0007294">
    <property type="term" value="P:germarium-derived oocyte fate determination"/>
    <property type="evidence" value="ECO:0000315"/>
    <property type="project" value="FlyBase"/>
</dbReference>
<dbReference type="GO" id="GO:0042062">
    <property type="term" value="P:long-term strengthening of neuromuscular junction"/>
    <property type="evidence" value="ECO:0000315"/>
    <property type="project" value="FlyBase"/>
</dbReference>
<dbReference type="GO" id="GO:0048790">
    <property type="term" value="P:maintenance of presynaptic active zone structure"/>
    <property type="evidence" value="ECO:0000314"/>
    <property type="project" value="FlyBase"/>
</dbReference>
<dbReference type="GO" id="GO:0007026">
    <property type="term" value="P:negative regulation of microtubule depolymerization"/>
    <property type="evidence" value="ECO:0000315"/>
    <property type="project" value="FlyBase"/>
</dbReference>
<dbReference type="GO" id="GO:0007274">
    <property type="term" value="P:neuromuscular synaptic transmission"/>
    <property type="evidence" value="ECO:0000315"/>
    <property type="project" value="FlyBase"/>
</dbReference>
<dbReference type="GO" id="GO:0007308">
    <property type="term" value="P:oocyte construction"/>
    <property type="evidence" value="ECO:0000315"/>
    <property type="project" value="FlyBase"/>
</dbReference>
<dbReference type="GO" id="GO:0030723">
    <property type="term" value="P:ovarian fusome organization"/>
    <property type="evidence" value="ECO:0000270"/>
    <property type="project" value="UniProtKB"/>
</dbReference>
<dbReference type="GO" id="GO:0007009">
    <property type="term" value="P:plasma membrane organization"/>
    <property type="evidence" value="ECO:0000304"/>
    <property type="project" value="FlyBase"/>
</dbReference>
<dbReference type="GO" id="GO:0035332">
    <property type="term" value="P:positive regulation of hippo signaling"/>
    <property type="evidence" value="ECO:0000315"/>
    <property type="project" value="FlyBase"/>
</dbReference>
<dbReference type="GO" id="GO:0008360">
    <property type="term" value="P:regulation of cell shape"/>
    <property type="evidence" value="ECO:0007669"/>
    <property type="project" value="UniProtKB-KW"/>
</dbReference>
<dbReference type="GO" id="GO:0050807">
    <property type="term" value="P:regulation of synapse organization"/>
    <property type="evidence" value="ECO:0000315"/>
    <property type="project" value="FlyBase"/>
</dbReference>
<dbReference type="CDD" id="cd00051">
    <property type="entry name" value="EFh"/>
    <property type="match status" value="1"/>
</dbReference>
<dbReference type="CDD" id="cd11808">
    <property type="entry name" value="SH3_Alpha_Spectrin"/>
    <property type="match status" value="1"/>
</dbReference>
<dbReference type="CDD" id="cd00176">
    <property type="entry name" value="SPEC"/>
    <property type="match status" value="13"/>
</dbReference>
<dbReference type="FunFam" id="1.20.58.60:FF:000197">
    <property type="entry name" value="Alpha spectrin, isoform B"/>
    <property type="match status" value="1"/>
</dbReference>
<dbReference type="FunFam" id="1.20.58.60:FF:000220">
    <property type="entry name" value="Alpha spectrin, isoform B"/>
    <property type="match status" value="1"/>
</dbReference>
<dbReference type="FunFam" id="1.20.58.60:FF:000263">
    <property type="entry name" value="Alpha spectrin, isoform C"/>
    <property type="match status" value="1"/>
</dbReference>
<dbReference type="FunFam" id="1.20.58.60:FF:000007">
    <property type="entry name" value="Spectrin alpha chain non-erythrocytic 1"/>
    <property type="match status" value="2"/>
</dbReference>
<dbReference type="FunFam" id="1.20.58.60:FF:000037">
    <property type="entry name" value="Spectrin alpha chain non-erythrocytic 1"/>
    <property type="match status" value="1"/>
</dbReference>
<dbReference type="FunFam" id="1.10.238.10:FF:000032">
    <property type="entry name" value="Spectrin alpha chain, non-erythrocytic 1"/>
    <property type="match status" value="1"/>
</dbReference>
<dbReference type="FunFam" id="1.20.58.60:FF:000006">
    <property type="entry name" value="Spectrin alpha chain, non-erythrocytic 1"/>
    <property type="match status" value="2"/>
</dbReference>
<dbReference type="FunFam" id="1.20.58.60:FF:000013">
    <property type="entry name" value="Spectrin alpha chain, non-erythrocytic 1"/>
    <property type="match status" value="2"/>
</dbReference>
<dbReference type="FunFam" id="1.20.58.60:FF:000017">
    <property type="entry name" value="Spectrin alpha chain, non-erythrocytic 1"/>
    <property type="match status" value="2"/>
</dbReference>
<dbReference type="FunFam" id="1.20.58.60:FF:000020">
    <property type="entry name" value="Spectrin alpha chain, non-erythrocytic 1"/>
    <property type="match status" value="4"/>
</dbReference>
<dbReference type="FunFam" id="1.20.58.60:FF:000035">
    <property type="entry name" value="Spectrin alpha chain, non-erythrocytic 1"/>
    <property type="match status" value="1"/>
</dbReference>
<dbReference type="FunFam" id="1.20.58.60:FF:000043">
    <property type="entry name" value="Spectrin alpha chain, non-erythrocytic 1"/>
    <property type="match status" value="1"/>
</dbReference>
<dbReference type="FunFam" id="2.30.30.40:FF:000036">
    <property type="entry name" value="Spectrin alpha chain, non-erythrocytic 1"/>
    <property type="match status" value="1"/>
</dbReference>
<dbReference type="FunFam" id="1.10.238.10:FF:000020">
    <property type="entry name" value="spectrin alpha chain, non-erythrocytic 1"/>
    <property type="match status" value="1"/>
</dbReference>
<dbReference type="Gene3D" id="1.20.58.60">
    <property type="match status" value="19"/>
</dbReference>
<dbReference type="Gene3D" id="1.10.238.10">
    <property type="entry name" value="EF-hand"/>
    <property type="match status" value="2"/>
</dbReference>
<dbReference type="Gene3D" id="2.30.30.40">
    <property type="entry name" value="SH3 Domains"/>
    <property type="match status" value="1"/>
</dbReference>
<dbReference type="InterPro" id="IPR035825">
    <property type="entry name" value="Alpha_Spectrin_SH3"/>
</dbReference>
<dbReference type="InterPro" id="IPR011992">
    <property type="entry name" value="EF-hand-dom_pair"/>
</dbReference>
<dbReference type="InterPro" id="IPR014837">
    <property type="entry name" value="EF-hand_Ca_insen"/>
</dbReference>
<dbReference type="InterPro" id="IPR018247">
    <property type="entry name" value="EF_Hand_1_Ca_BS"/>
</dbReference>
<dbReference type="InterPro" id="IPR002048">
    <property type="entry name" value="EF_hand_dom"/>
</dbReference>
<dbReference type="InterPro" id="IPR036028">
    <property type="entry name" value="SH3-like_dom_sf"/>
</dbReference>
<dbReference type="InterPro" id="IPR001452">
    <property type="entry name" value="SH3_domain"/>
</dbReference>
<dbReference type="InterPro" id="IPR018159">
    <property type="entry name" value="Spectrin/alpha-actinin"/>
</dbReference>
<dbReference type="InterPro" id="IPR002017">
    <property type="entry name" value="Spectrin_repeat"/>
</dbReference>
<dbReference type="PANTHER" id="PTHR11915">
    <property type="entry name" value="SPECTRIN/FILAMIN RELATED CYTOSKELETAL PROTEIN"/>
    <property type="match status" value="1"/>
</dbReference>
<dbReference type="Pfam" id="PF13499">
    <property type="entry name" value="EF-hand_7"/>
    <property type="match status" value="1"/>
</dbReference>
<dbReference type="Pfam" id="PF08726">
    <property type="entry name" value="EFhand_Ca_insen"/>
    <property type="match status" value="1"/>
</dbReference>
<dbReference type="Pfam" id="PF00018">
    <property type="entry name" value="SH3_1"/>
    <property type="match status" value="1"/>
</dbReference>
<dbReference type="Pfam" id="PF00435">
    <property type="entry name" value="Spectrin"/>
    <property type="match status" value="20"/>
</dbReference>
<dbReference type="PRINTS" id="PR00452">
    <property type="entry name" value="SH3DOMAIN"/>
</dbReference>
<dbReference type="PRINTS" id="PR01887">
    <property type="entry name" value="SPECTRNALPHA"/>
</dbReference>
<dbReference type="SMART" id="SM00054">
    <property type="entry name" value="EFh"/>
    <property type="match status" value="2"/>
</dbReference>
<dbReference type="SMART" id="SM01184">
    <property type="entry name" value="efhand_Ca_insen"/>
    <property type="match status" value="1"/>
</dbReference>
<dbReference type="SMART" id="SM00326">
    <property type="entry name" value="SH3"/>
    <property type="match status" value="1"/>
</dbReference>
<dbReference type="SMART" id="SM00150">
    <property type="entry name" value="SPEC"/>
    <property type="match status" value="20"/>
</dbReference>
<dbReference type="SUPFAM" id="SSF47473">
    <property type="entry name" value="EF-hand"/>
    <property type="match status" value="1"/>
</dbReference>
<dbReference type="SUPFAM" id="SSF50044">
    <property type="entry name" value="SH3-domain"/>
    <property type="match status" value="1"/>
</dbReference>
<dbReference type="SUPFAM" id="SSF46966">
    <property type="entry name" value="Spectrin repeat"/>
    <property type="match status" value="17"/>
</dbReference>
<dbReference type="PROSITE" id="PS00018">
    <property type="entry name" value="EF_HAND_1"/>
    <property type="match status" value="2"/>
</dbReference>
<dbReference type="PROSITE" id="PS50222">
    <property type="entry name" value="EF_HAND_2"/>
    <property type="match status" value="2"/>
</dbReference>
<dbReference type="PROSITE" id="PS50002">
    <property type="entry name" value="SH3"/>
    <property type="match status" value="1"/>
</dbReference>
<protein>
    <recommendedName>
        <fullName>Spectrin alpha chain</fullName>
    </recommendedName>
</protein>
<comment type="function">
    <text evidence="4 10 11">Spectrin is the major constituent of the cytoskeletal network underlying the erythrocyte plasma membrane. It associates with band 4.1 and actin to form the cytoskeletal superstructure of the erythrocyte plasma membrane. Essential for larval survival and development. Stabilizes cell to cell interactions that are critical for the maintenance of cell shape and subcellular organization within embryonic tissues. Lva and spectrin may form a Golgi-based scaffold that mediates interaction of Golgi bodies with microtubules and facilitates Golgi-derived membrane secretion required for the formation of furrows during cellularization.</text>
</comment>
<comment type="subunit">
    <text evidence="4 8">Native spectrin molecule is a tetramer composed of two antiparallel heterodimers joined head to head so that each end of the native molecule includes the C-terminus of the alpha subunit and the N-terminus of the beta subunit. Interacts with calmodulin in a calcium-dependent manner, interacts with F-actin and also interacts with Lva. Interacts with Ten-m.</text>
</comment>
<comment type="subcellular location">
    <subcellularLocation>
        <location evidence="4 12">Cytoplasm</location>
        <location evidence="4 12">Cytoskeleton</location>
    </subcellularLocation>
    <subcellularLocation>
        <location evidence="4">Golgi apparatus</location>
    </subcellularLocation>
    <subcellularLocation>
        <location evidence="7">Cell projection</location>
        <location evidence="7">Cilium</location>
        <location evidence="7">Flagellum</location>
    </subcellularLocation>
    <text evidence="7 12">Near the inner surface of the plasma membrane of nearly all cells. Lva-alpha-spectrin complexes are found at the Golgi. Localizes to the growing end of elongating spermatid cysts (PubMed:20237161). Associated with spectrosomes and the fusome during female germline cystocyte proliferation and differentiation (PubMed:9344535).</text>
</comment>
<comment type="tissue specificity">
    <text evidence="9">A substantial pool of maternal protein in the egg undergoes dynamic changes in distribution early in embryogenesis. In gastrulated embryo, the highest level of protein is found in the respiratory tract cells and the lowest in parts of the forming gut.</text>
</comment>
<comment type="developmental stage">
    <text evidence="7">Expressed in elongating spermatid cysts during spermatogenesis (at protein level) (PubMed:20237161). Expressed both maternally and zygotically.</text>
</comment>
<comment type="miscellaneous">
    <text>Its transcript shares the first untranslated exon with the dlt transcript, suggesting a common regulation.</text>
</comment>
<comment type="similarity">
    <text evidence="13">Belongs to the spectrin family.</text>
</comment>
<comment type="sequence caution" evidence="13">
    <conflict type="erroneous initiation">
        <sequence resource="EMBL-CDS" id="AAL39886"/>
    </conflict>
    <text>Truncated N-terminus.</text>
</comment>
<comment type="sequence caution" evidence="13">
    <conflict type="frameshift">
        <sequence resource="EMBL-CDS" id="ABA81823"/>
    </conflict>
</comment>
<proteinExistence type="evidence at protein level"/>